<feature type="signal peptide" evidence="1">
    <location>
        <begin position="1"/>
        <end position="34"/>
    </location>
</feature>
<feature type="chain" id="PRO_1000064566" description="Glucans biosynthesis protein G">
    <location>
        <begin position="35"/>
        <end position="545"/>
    </location>
</feature>
<feature type="region of interest" description="Disordered" evidence="2">
    <location>
        <begin position="38"/>
        <end position="60"/>
    </location>
</feature>
<organism>
    <name type="scientific">Shewanella sp. (strain ANA-3)</name>
    <dbReference type="NCBI Taxonomy" id="94122"/>
    <lineage>
        <taxon>Bacteria</taxon>
        <taxon>Pseudomonadati</taxon>
        <taxon>Pseudomonadota</taxon>
        <taxon>Gammaproteobacteria</taxon>
        <taxon>Alteromonadales</taxon>
        <taxon>Shewanellaceae</taxon>
        <taxon>Shewanella</taxon>
    </lineage>
</organism>
<proteinExistence type="inferred from homology"/>
<comment type="function">
    <text evidence="1">Involved in the biosynthesis of osmoregulated periplasmic glucans (OPGs).</text>
</comment>
<comment type="pathway">
    <text evidence="1">Glycan metabolism; osmoregulated periplasmic glucan (OPG) biosynthesis.</text>
</comment>
<comment type="subcellular location">
    <subcellularLocation>
        <location evidence="1">Periplasm</location>
    </subcellularLocation>
</comment>
<comment type="similarity">
    <text evidence="1">Belongs to the OpgD/OpgG family.</text>
</comment>
<dbReference type="EMBL" id="CP000469">
    <property type="protein sequence ID" value="ABK48118.1"/>
    <property type="molecule type" value="Genomic_DNA"/>
</dbReference>
<dbReference type="RefSeq" id="WP_011716889.1">
    <property type="nucleotide sequence ID" value="NC_008577.1"/>
</dbReference>
<dbReference type="SMR" id="A0KWE9"/>
<dbReference type="STRING" id="94122.Shewana3_1887"/>
<dbReference type="KEGG" id="shn:Shewana3_1887"/>
<dbReference type="eggNOG" id="COG3131">
    <property type="taxonomic scope" value="Bacteria"/>
</dbReference>
<dbReference type="HOGENOM" id="CLU_023403_2_0_6"/>
<dbReference type="OrthoDB" id="335750at2"/>
<dbReference type="UniPathway" id="UPA00637"/>
<dbReference type="Proteomes" id="UP000002589">
    <property type="component" value="Chromosome"/>
</dbReference>
<dbReference type="GO" id="GO:0030288">
    <property type="term" value="C:outer membrane-bounded periplasmic space"/>
    <property type="evidence" value="ECO:0007669"/>
    <property type="project" value="TreeGrafter"/>
</dbReference>
<dbReference type="GO" id="GO:0030246">
    <property type="term" value="F:carbohydrate binding"/>
    <property type="evidence" value="ECO:0007669"/>
    <property type="project" value="InterPro"/>
</dbReference>
<dbReference type="GO" id="GO:0003824">
    <property type="term" value="F:catalytic activity"/>
    <property type="evidence" value="ECO:0007669"/>
    <property type="project" value="InterPro"/>
</dbReference>
<dbReference type="GO" id="GO:0051274">
    <property type="term" value="P:beta-glucan biosynthetic process"/>
    <property type="evidence" value="ECO:0007669"/>
    <property type="project" value="TreeGrafter"/>
</dbReference>
<dbReference type="FunFam" id="2.60.40.10:FF:001915">
    <property type="entry name" value="Glucans biosynthesis protein G"/>
    <property type="match status" value="1"/>
</dbReference>
<dbReference type="FunFam" id="2.70.98.10:FF:000001">
    <property type="entry name" value="Glucans biosynthesis protein G"/>
    <property type="match status" value="1"/>
</dbReference>
<dbReference type="Gene3D" id="2.70.98.10">
    <property type="match status" value="1"/>
</dbReference>
<dbReference type="Gene3D" id="2.60.40.10">
    <property type="entry name" value="Immunoglobulins"/>
    <property type="match status" value="1"/>
</dbReference>
<dbReference type="HAMAP" id="MF_01069">
    <property type="entry name" value="MdoG_OpgG"/>
    <property type="match status" value="1"/>
</dbReference>
<dbReference type="InterPro" id="IPR011013">
    <property type="entry name" value="Gal_mutarotase_sf_dom"/>
</dbReference>
<dbReference type="InterPro" id="IPR014718">
    <property type="entry name" value="GH-type_carb-bd"/>
</dbReference>
<dbReference type="InterPro" id="IPR014438">
    <property type="entry name" value="Glucan_biosyn_MdoG/MdoD"/>
</dbReference>
<dbReference type="InterPro" id="IPR007444">
    <property type="entry name" value="Glucan_biosyn_MdoG_C"/>
</dbReference>
<dbReference type="InterPro" id="IPR013783">
    <property type="entry name" value="Ig-like_fold"/>
</dbReference>
<dbReference type="InterPro" id="IPR014756">
    <property type="entry name" value="Ig_E-set"/>
</dbReference>
<dbReference type="InterPro" id="IPR023704">
    <property type="entry name" value="MdoG_OpgG"/>
</dbReference>
<dbReference type="PANTHER" id="PTHR30504">
    <property type="entry name" value="GLUCANS BIOSYNTHESIS PROTEIN"/>
    <property type="match status" value="1"/>
</dbReference>
<dbReference type="PANTHER" id="PTHR30504:SF2">
    <property type="entry name" value="GLUCANS BIOSYNTHESIS PROTEIN G"/>
    <property type="match status" value="1"/>
</dbReference>
<dbReference type="Pfam" id="PF04349">
    <property type="entry name" value="MdoG"/>
    <property type="match status" value="1"/>
</dbReference>
<dbReference type="PIRSF" id="PIRSF006281">
    <property type="entry name" value="MdoG"/>
    <property type="match status" value="1"/>
</dbReference>
<dbReference type="SUPFAM" id="SSF81296">
    <property type="entry name" value="E set domains"/>
    <property type="match status" value="1"/>
</dbReference>
<dbReference type="SUPFAM" id="SSF74650">
    <property type="entry name" value="Galactose mutarotase-like"/>
    <property type="match status" value="1"/>
</dbReference>
<name>OPGG_SHESA</name>
<gene>
    <name evidence="1" type="primary">opgG</name>
    <name type="ordered locus">Shewana3_1887</name>
</gene>
<sequence length="545" mass="60888">MVSLLRCQSFKPSSSLICSLALSAAFALSSSAFAEETKPAENKPATPVVSPPKATAQPANKNQVRFTKTGTFDGDSVVKLARKLASKPYVVLKDPLPAGLAKLTYDEYRDIRFNPISSIWRDQGLPFQMQMFHRGFYFQDLIEIAIVEANQATHLAYEPKYFTAGEVITQALPNDDIGYSGFRIHNQLNTNGVYDELMVFQGASYFRALGKGNSYGLSARGLALKTADPEGEEFPIFRAFWVERPSYDSNLIVVHALLDSPSVAGAYRFSVRPGDNTQIDVEATLFPRVELSKVGLAPSTSMFLHSLNGRHDTDDFRPEVHDSDGLLMFNGRGEHLWRPLANPRQLQVSAFSDNSPQGFGLIQRERNYASYQDLEAHYERRPSLWIEPVGNWGQGAVVLTEIPTESEIHDNIVSFWKPRQPIPAGSEYHFAYRMSWGEEPVAKTNSVVVSRTASGRADIAKATPRRLFVVDYHLNGAMPDELPLAKVESSGGVISNVVIARNAANNGYRLAFELEPEDKELIELRAELKFSTPRQVETWLYRWTL</sequence>
<reference key="1">
    <citation type="submission" date="2006-09" db="EMBL/GenBank/DDBJ databases">
        <title>Complete sequence of chromosome 1 of Shewanella sp. ANA-3.</title>
        <authorList>
            <person name="Copeland A."/>
            <person name="Lucas S."/>
            <person name="Lapidus A."/>
            <person name="Barry K."/>
            <person name="Detter J.C."/>
            <person name="Glavina del Rio T."/>
            <person name="Hammon N."/>
            <person name="Israni S."/>
            <person name="Dalin E."/>
            <person name="Tice H."/>
            <person name="Pitluck S."/>
            <person name="Chertkov O."/>
            <person name="Brettin T."/>
            <person name="Bruce D."/>
            <person name="Han C."/>
            <person name="Tapia R."/>
            <person name="Gilna P."/>
            <person name="Schmutz J."/>
            <person name="Larimer F."/>
            <person name="Land M."/>
            <person name="Hauser L."/>
            <person name="Kyrpides N."/>
            <person name="Kim E."/>
            <person name="Newman D."/>
            <person name="Salticov C."/>
            <person name="Konstantinidis K."/>
            <person name="Klappenback J."/>
            <person name="Tiedje J."/>
            <person name="Richardson P."/>
        </authorList>
    </citation>
    <scope>NUCLEOTIDE SEQUENCE [LARGE SCALE GENOMIC DNA]</scope>
    <source>
        <strain>ANA-3</strain>
    </source>
</reference>
<accession>A0KWE9</accession>
<keyword id="KW-0574">Periplasm</keyword>
<keyword id="KW-0732">Signal</keyword>
<protein>
    <recommendedName>
        <fullName evidence="1">Glucans biosynthesis protein G</fullName>
    </recommendedName>
</protein>
<evidence type="ECO:0000255" key="1">
    <source>
        <dbReference type="HAMAP-Rule" id="MF_01069"/>
    </source>
</evidence>
<evidence type="ECO:0000256" key="2">
    <source>
        <dbReference type="SAM" id="MobiDB-lite"/>
    </source>
</evidence>